<feature type="chain" id="PRO_0000275625" description="Photosystem I assembly protein Ycf3">
    <location>
        <begin position="1"/>
        <end position="168"/>
    </location>
</feature>
<feature type="repeat" description="TPR 1">
    <location>
        <begin position="35"/>
        <end position="68"/>
    </location>
</feature>
<feature type="repeat" description="TPR 2">
    <location>
        <begin position="72"/>
        <end position="105"/>
    </location>
</feature>
<feature type="repeat" description="TPR 3">
    <location>
        <begin position="120"/>
        <end position="153"/>
    </location>
</feature>
<proteinExistence type="inferred from homology"/>
<geneLocation type="chloroplast"/>
<keyword id="KW-0150">Chloroplast</keyword>
<keyword id="KW-0472">Membrane</keyword>
<keyword id="KW-0602">Photosynthesis</keyword>
<keyword id="KW-0934">Plastid</keyword>
<keyword id="KW-0677">Repeat</keyword>
<keyword id="KW-0793">Thylakoid</keyword>
<keyword id="KW-0802">TPR repeat</keyword>
<protein>
    <recommendedName>
        <fullName evidence="1">Photosystem I assembly protein Ycf3</fullName>
    </recommendedName>
</protein>
<evidence type="ECO:0000255" key="1">
    <source>
        <dbReference type="HAMAP-Rule" id="MF_00439"/>
    </source>
</evidence>
<reference key="1">
    <citation type="submission" date="2005-09" db="EMBL/GenBank/DDBJ databases">
        <title>The chloroplast genome of mulberry: structural features and comparative analysis.</title>
        <authorList>
            <person name="Ravi V."/>
            <person name="Khurana J.P."/>
            <person name="Tyagi A.K."/>
            <person name="Khurana P."/>
        </authorList>
    </citation>
    <scope>NUCLEOTIDE SEQUENCE [LARGE SCALE GENOMIC DNA]</scope>
    <source>
        <strain>cv. K2</strain>
    </source>
</reference>
<name>YCF3_MORIN</name>
<sequence>MSRSRINGNFIDKTFSIVANILLRIIPTTSGEKEAFAYYRDGMSAQSEGNYAEALQNYYEAMRLEIDPYDRSYILYNIGLIHTRNGEHTKALEYYFRALERNPFLPQAFNNMAVICHYRGEQAIRQGDSEIAEAWFDQAAEYWKQALALTPGNYIEAQNWLKITGRFE</sequence>
<organism>
    <name type="scientific">Morus indica</name>
    <name type="common">Mulberry</name>
    <dbReference type="NCBI Taxonomy" id="248361"/>
    <lineage>
        <taxon>Eukaryota</taxon>
        <taxon>Viridiplantae</taxon>
        <taxon>Streptophyta</taxon>
        <taxon>Embryophyta</taxon>
        <taxon>Tracheophyta</taxon>
        <taxon>Spermatophyta</taxon>
        <taxon>Magnoliopsida</taxon>
        <taxon>eudicotyledons</taxon>
        <taxon>Gunneridae</taxon>
        <taxon>Pentapetalae</taxon>
        <taxon>rosids</taxon>
        <taxon>fabids</taxon>
        <taxon>Rosales</taxon>
        <taxon>Moraceae</taxon>
        <taxon>Moreae</taxon>
        <taxon>Morus</taxon>
    </lineage>
</organism>
<gene>
    <name evidence="1" type="primary">ycf3</name>
    <name type="ordered locus">MoinCp022</name>
</gene>
<comment type="function">
    <text evidence="1">Essential for the assembly of the photosystem I (PSI) complex. May act as a chaperone-like factor to guide the assembly of the PSI subunits.</text>
</comment>
<comment type="subcellular location">
    <subcellularLocation>
        <location evidence="1">Plastid</location>
        <location evidence="1">Chloroplast thylakoid membrane</location>
        <topology evidence="1">Peripheral membrane protein</topology>
    </subcellularLocation>
</comment>
<comment type="similarity">
    <text evidence="1">Belongs to the Ycf3 family.</text>
</comment>
<dbReference type="EMBL" id="DQ226511">
    <property type="protein sequence ID" value="ABB20959.1"/>
    <property type="molecule type" value="Genomic_DNA"/>
</dbReference>
<dbReference type="RefSeq" id="YP_762262.1">
    <property type="nucleotide sequence ID" value="NC_008359.1"/>
</dbReference>
<dbReference type="SMR" id="Q09X16"/>
<dbReference type="GeneID" id="4290570"/>
<dbReference type="GO" id="GO:0009535">
    <property type="term" value="C:chloroplast thylakoid membrane"/>
    <property type="evidence" value="ECO:0007669"/>
    <property type="project" value="UniProtKB-SubCell"/>
</dbReference>
<dbReference type="GO" id="GO:0015979">
    <property type="term" value="P:photosynthesis"/>
    <property type="evidence" value="ECO:0007669"/>
    <property type="project" value="UniProtKB-UniRule"/>
</dbReference>
<dbReference type="FunFam" id="1.25.40.10:FF:000004">
    <property type="entry name" value="Photosystem I assembly protein Ycf3"/>
    <property type="match status" value="1"/>
</dbReference>
<dbReference type="Gene3D" id="1.25.40.10">
    <property type="entry name" value="Tetratricopeptide repeat domain"/>
    <property type="match status" value="1"/>
</dbReference>
<dbReference type="HAMAP" id="MF_00439">
    <property type="entry name" value="Ycf3"/>
    <property type="match status" value="1"/>
</dbReference>
<dbReference type="InterPro" id="IPR022818">
    <property type="entry name" value="PSI_Ycf3_assembly"/>
</dbReference>
<dbReference type="InterPro" id="IPR011990">
    <property type="entry name" value="TPR-like_helical_dom_sf"/>
</dbReference>
<dbReference type="InterPro" id="IPR019734">
    <property type="entry name" value="TPR_rpt"/>
</dbReference>
<dbReference type="InterPro" id="IPR051685">
    <property type="entry name" value="Ycf3/AcsC/BcsC/TPR_MFPF"/>
</dbReference>
<dbReference type="NCBIfam" id="NF002725">
    <property type="entry name" value="PRK02603.1"/>
    <property type="match status" value="1"/>
</dbReference>
<dbReference type="PANTHER" id="PTHR44943">
    <property type="entry name" value="CELLULOSE SYNTHASE OPERON PROTEIN C"/>
    <property type="match status" value="1"/>
</dbReference>
<dbReference type="PANTHER" id="PTHR44943:SF8">
    <property type="entry name" value="TPR REPEAT-CONTAINING PROTEIN MJ0263"/>
    <property type="match status" value="1"/>
</dbReference>
<dbReference type="Pfam" id="PF00515">
    <property type="entry name" value="TPR_1"/>
    <property type="match status" value="1"/>
</dbReference>
<dbReference type="SMART" id="SM00028">
    <property type="entry name" value="TPR"/>
    <property type="match status" value="3"/>
</dbReference>
<dbReference type="SUPFAM" id="SSF48452">
    <property type="entry name" value="TPR-like"/>
    <property type="match status" value="1"/>
</dbReference>
<dbReference type="PROSITE" id="PS50005">
    <property type="entry name" value="TPR"/>
    <property type="match status" value="3"/>
</dbReference>
<dbReference type="PROSITE" id="PS50293">
    <property type="entry name" value="TPR_REGION"/>
    <property type="match status" value="2"/>
</dbReference>
<accession>Q09X16</accession>